<dbReference type="EMBL" id="AE004092">
    <property type="protein sequence ID" value="AAK33258.1"/>
    <property type="molecule type" value="Genomic_DNA"/>
</dbReference>
<dbReference type="EMBL" id="CP000017">
    <property type="protein sequence ID" value="AAZ50751.1"/>
    <property type="molecule type" value="Genomic_DNA"/>
</dbReference>
<dbReference type="RefSeq" id="NP_268537.1">
    <property type="nucleotide sequence ID" value="NC_002737.2"/>
</dbReference>
<dbReference type="SMR" id="Q9A1Q2"/>
<dbReference type="PaxDb" id="1314-HKU360_00178"/>
<dbReference type="KEGG" id="spy:SPy_0155"/>
<dbReference type="KEGG" id="spz:M5005_Spy0132"/>
<dbReference type="PATRIC" id="fig|160490.10.peg.136"/>
<dbReference type="HOGENOM" id="CLU_022916_0_0_9"/>
<dbReference type="OMA" id="EGFKIKP"/>
<dbReference type="Proteomes" id="UP000000750">
    <property type="component" value="Chromosome"/>
</dbReference>
<dbReference type="GO" id="GO:0005524">
    <property type="term" value="F:ATP binding"/>
    <property type="evidence" value="ECO:0007669"/>
    <property type="project" value="UniProtKB-UniRule"/>
</dbReference>
<dbReference type="GO" id="GO:0046933">
    <property type="term" value="F:proton-transporting ATP synthase activity, rotational mechanism"/>
    <property type="evidence" value="ECO:0007669"/>
    <property type="project" value="UniProtKB-UniRule"/>
</dbReference>
<dbReference type="GO" id="GO:0042777">
    <property type="term" value="P:proton motive force-driven plasma membrane ATP synthesis"/>
    <property type="evidence" value="ECO:0007669"/>
    <property type="project" value="UniProtKB-UniRule"/>
</dbReference>
<dbReference type="CDD" id="cd18112">
    <property type="entry name" value="ATP-synt_V_A-type_beta_C"/>
    <property type="match status" value="1"/>
</dbReference>
<dbReference type="CDD" id="cd18118">
    <property type="entry name" value="ATP-synt_V_A-type_beta_N"/>
    <property type="match status" value="1"/>
</dbReference>
<dbReference type="CDD" id="cd01135">
    <property type="entry name" value="V_A-ATPase_B"/>
    <property type="match status" value="1"/>
</dbReference>
<dbReference type="Gene3D" id="3.40.50.12240">
    <property type="match status" value="1"/>
</dbReference>
<dbReference type="HAMAP" id="MF_00310">
    <property type="entry name" value="ATP_synth_B_arch"/>
    <property type="match status" value="1"/>
</dbReference>
<dbReference type="InterPro" id="IPR055190">
    <property type="entry name" value="ATP-synt_VA_C"/>
</dbReference>
<dbReference type="InterPro" id="IPR020003">
    <property type="entry name" value="ATPase_a/bsu_AS"/>
</dbReference>
<dbReference type="InterPro" id="IPR004100">
    <property type="entry name" value="ATPase_F1/V1/A1_a/bsu_N"/>
</dbReference>
<dbReference type="InterPro" id="IPR000194">
    <property type="entry name" value="ATPase_F1/V1/A1_a/bsu_nucl-bd"/>
</dbReference>
<dbReference type="InterPro" id="IPR027417">
    <property type="entry name" value="P-loop_NTPase"/>
</dbReference>
<dbReference type="InterPro" id="IPR022879">
    <property type="entry name" value="V-ATPase_su_B/beta"/>
</dbReference>
<dbReference type="NCBIfam" id="NF003235">
    <property type="entry name" value="PRK04196.1"/>
    <property type="match status" value="1"/>
</dbReference>
<dbReference type="PANTHER" id="PTHR43389">
    <property type="entry name" value="V-TYPE PROTON ATPASE SUBUNIT B"/>
    <property type="match status" value="1"/>
</dbReference>
<dbReference type="PANTHER" id="PTHR43389:SF4">
    <property type="entry name" value="V-TYPE PROTON ATPASE SUBUNIT B"/>
    <property type="match status" value="1"/>
</dbReference>
<dbReference type="Pfam" id="PF00006">
    <property type="entry name" value="ATP-synt_ab"/>
    <property type="match status" value="1"/>
</dbReference>
<dbReference type="Pfam" id="PF02874">
    <property type="entry name" value="ATP-synt_ab_N"/>
    <property type="match status" value="1"/>
</dbReference>
<dbReference type="Pfam" id="PF22919">
    <property type="entry name" value="ATP-synt_VA_C"/>
    <property type="match status" value="1"/>
</dbReference>
<dbReference type="PIRSF" id="PIRSF039114">
    <property type="entry name" value="V-ATPsynth_beta/V-ATPase_B"/>
    <property type="match status" value="1"/>
</dbReference>
<dbReference type="SUPFAM" id="SSF47917">
    <property type="entry name" value="C-terminal domain of alpha and beta subunits of F1 ATP synthase"/>
    <property type="match status" value="1"/>
</dbReference>
<dbReference type="SUPFAM" id="SSF52540">
    <property type="entry name" value="P-loop containing nucleoside triphosphate hydrolases"/>
    <property type="match status" value="1"/>
</dbReference>
<dbReference type="PROSITE" id="PS00152">
    <property type="entry name" value="ATPASE_ALPHA_BETA"/>
    <property type="match status" value="1"/>
</dbReference>
<comment type="function">
    <text evidence="1">Produces ATP from ADP in the presence of a proton gradient across the membrane. The V-type beta chain is a regulatory subunit.</text>
</comment>
<comment type="similarity">
    <text evidence="1">Belongs to the ATPase alpha/beta chains family.</text>
</comment>
<keyword id="KW-0066">ATP synthesis</keyword>
<keyword id="KW-0375">Hydrogen ion transport</keyword>
<keyword id="KW-0406">Ion transport</keyword>
<keyword id="KW-1185">Reference proteome</keyword>
<keyword id="KW-0813">Transport</keyword>
<name>VATB_STRP1</name>
<gene>
    <name evidence="1" type="primary">atpB</name>
    <name type="synonym">ntpB</name>
    <name type="ordered locus">SPy_0155</name>
    <name type="ordered locus">M5005_Spy0132</name>
</gene>
<accession>Q9A1Q2</accession>
<accession>Q491G7</accession>
<organism>
    <name type="scientific">Streptococcus pyogenes serotype M1</name>
    <dbReference type="NCBI Taxonomy" id="301447"/>
    <lineage>
        <taxon>Bacteria</taxon>
        <taxon>Bacillati</taxon>
        <taxon>Bacillota</taxon>
        <taxon>Bacilli</taxon>
        <taxon>Lactobacillales</taxon>
        <taxon>Streptococcaceae</taxon>
        <taxon>Streptococcus</taxon>
    </lineage>
</organism>
<sequence>MSVLKEYRTVSEVVGPLMIVDQVAGVHYNELVDITLHNGERRKGQVLEVQGDKAMVQLFEGSTGINLAKTKVRFTGHPLELAVSEDMVGRIFDGMGQPIDGGPELIPEKYLDIDGQAINPVARDYPDEFIQTGISAIDHLNTLVRGQKLPVFSGSGLPHNELAAQIARQATVLNSDDNFAVVFAAMGITFEEAEFFMNDLRETGAIDRSVLFINLANDPAIERIATPRIALTTAEYLAYEKGMHVLVIMTDMTNYCEALREVSAARREVPGRRGYPGYLYTNLSTLYERAGRLIGKKGSVTQIPILTMPEDDITHPIPDLTGYITEGQIILSQELYKNGFRPPINVLPSLSRLKDKGSGEGKTRQDHAATMNQLFAAYAQGKQAKELAVVLGESALSETDKLYVAFTNRFEEEYINQGFYTNRSIEESLDLGWELLSILPRTELKRIKDDMLDRYLPKADTTMTKVFVAND</sequence>
<evidence type="ECO:0000255" key="1">
    <source>
        <dbReference type="HAMAP-Rule" id="MF_00310"/>
    </source>
</evidence>
<feature type="chain" id="PRO_0000144678" description="V-type ATP synthase beta chain">
    <location>
        <begin position="1"/>
        <end position="471"/>
    </location>
</feature>
<proteinExistence type="inferred from homology"/>
<protein>
    <recommendedName>
        <fullName evidence="1">V-type ATP synthase beta chain</fullName>
    </recommendedName>
    <alternativeName>
        <fullName evidence="1">V-ATPase subunit B</fullName>
    </alternativeName>
</protein>
<reference key="1">
    <citation type="journal article" date="2001" name="Proc. Natl. Acad. Sci. U.S.A.">
        <title>Complete genome sequence of an M1 strain of Streptococcus pyogenes.</title>
        <authorList>
            <person name="Ferretti J.J."/>
            <person name="McShan W.M."/>
            <person name="Ajdic D.J."/>
            <person name="Savic D.J."/>
            <person name="Savic G."/>
            <person name="Lyon K."/>
            <person name="Primeaux C."/>
            <person name="Sezate S."/>
            <person name="Suvorov A.N."/>
            <person name="Kenton S."/>
            <person name="Lai H.S."/>
            <person name="Lin S.P."/>
            <person name="Qian Y."/>
            <person name="Jia H.G."/>
            <person name="Najar F.Z."/>
            <person name="Ren Q."/>
            <person name="Zhu H."/>
            <person name="Song L."/>
            <person name="White J."/>
            <person name="Yuan X."/>
            <person name="Clifton S.W."/>
            <person name="Roe B.A."/>
            <person name="McLaughlin R.E."/>
        </authorList>
    </citation>
    <scope>NUCLEOTIDE SEQUENCE [LARGE SCALE GENOMIC DNA]</scope>
    <source>
        <strain>ATCC 700294 / SF370 / Serotype M1</strain>
    </source>
</reference>
<reference key="2">
    <citation type="journal article" date="2005" name="J. Infect. Dis.">
        <title>Evolutionary origin and emergence of a highly successful clone of serotype M1 group A Streptococcus involved multiple horizontal gene transfer events.</title>
        <authorList>
            <person name="Sumby P."/>
            <person name="Porcella S.F."/>
            <person name="Madrigal A.G."/>
            <person name="Barbian K.D."/>
            <person name="Virtaneva K."/>
            <person name="Ricklefs S.M."/>
            <person name="Sturdevant D.E."/>
            <person name="Graham M.R."/>
            <person name="Vuopio-Varkila J."/>
            <person name="Hoe N.P."/>
            <person name="Musser J.M."/>
        </authorList>
    </citation>
    <scope>NUCLEOTIDE SEQUENCE [LARGE SCALE GENOMIC DNA]</scope>
    <source>
        <strain>ATCC BAA-947 / MGAS5005 / Serotype M1</strain>
    </source>
</reference>